<evidence type="ECO:0000255" key="1">
    <source>
        <dbReference type="HAMAP-Rule" id="MF_00480"/>
    </source>
</evidence>
<evidence type="ECO:0000305" key="2"/>
<comment type="function">
    <text evidence="1">One of the primary rRNA binding proteins, it binds directly to 16S rRNA where it nucleates assembly of the head domain of the 30S subunit. Is located at the subunit interface close to the decoding center, probably blocks exit of the E-site tRNA.</text>
</comment>
<comment type="subunit">
    <text evidence="1">Part of the 30S ribosomal subunit. Contacts proteins S9 and S11.</text>
</comment>
<comment type="similarity">
    <text evidence="1">Belongs to the universal ribosomal protein uS7 family.</text>
</comment>
<gene>
    <name evidence="1" type="primary">rpsG</name>
    <name type="ordered locus">SeAg_B3644</name>
</gene>
<feature type="chain" id="PRO_1000125993" description="Small ribosomal subunit protein uS7">
    <location>
        <begin position="1"/>
        <end position="156"/>
    </location>
</feature>
<proteinExistence type="inferred from homology"/>
<dbReference type="EMBL" id="CP001138">
    <property type="protein sequence ID" value="ACH52817.1"/>
    <property type="molecule type" value="Genomic_DNA"/>
</dbReference>
<dbReference type="RefSeq" id="WP_001138043.1">
    <property type="nucleotide sequence ID" value="NC_011149.1"/>
</dbReference>
<dbReference type="SMR" id="B5F8F9"/>
<dbReference type="GeneID" id="93778657"/>
<dbReference type="KEGG" id="sea:SeAg_B3644"/>
<dbReference type="HOGENOM" id="CLU_072226_1_1_6"/>
<dbReference type="Proteomes" id="UP000008819">
    <property type="component" value="Chromosome"/>
</dbReference>
<dbReference type="GO" id="GO:0015935">
    <property type="term" value="C:small ribosomal subunit"/>
    <property type="evidence" value="ECO:0007669"/>
    <property type="project" value="InterPro"/>
</dbReference>
<dbReference type="GO" id="GO:0019843">
    <property type="term" value="F:rRNA binding"/>
    <property type="evidence" value="ECO:0007669"/>
    <property type="project" value="UniProtKB-UniRule"/>
</dbReference>
<dbReference type="GO" id="GO:0003735">
    <property type="term" value="F:structural constituent of ribosome"/>
    <property type="evidence" value="ECO:0007669"/>
    <property type="project" value="InterPro"/>
</dbReference>
<dbReference type="GO" id="GO:0000049">
    <property type="term" value="F:tRNA binding"/>
    <property type="evidence" value="ECO:0007669"/>
    <property type="project" value="UniProtKB-UniRule"/>
</dbReference>
<dbReference type="GO" id="GO:0006412">
    <property type="term" value="P:translation"/>
    <property type="evidence" value="ECO:0007669"/>
    <property type="project" value="UniProtKB-UniRule"/>
</dbReference>
<dbReference type="CDD" id="cd14869">
    <property type="entry name" value="uS7_Bacteria"/>
    <property type="match status" value="1"/>
</dbReference>
<dbReference type="FunFam" id="1.10.455.10:FF:000001">
    <property type="entry name" value="30S ribosomal protein S7"/>
    <property type="match status" value="1"/>
</dbReference>
<dbReference type="Gene3D" id="1.10.455.10">
    <property type="entry name" value="Ribosomal protein S7 domain"/>
    <property type="match status" value="1"/>
</dbReference>
<dbReference type="HAMAP" id="MF_00480_B">
    <property type="entry name" value="Ribosomal_uS7_B"/>
    <property type="match status" value="1"/>
</dbReference>
<dbReference type="InterPro" id="IPR000235">
    <property type="entry name" value="Ribosomal_uS7"/>
</dbReference>
<dbReference type="InterPro" id="IPR005717">
    <property type="entry name" value="Ribosomal_uS7_bac/org-type"/>
</dbReference>
<dbReference type="InterPro" id="IPR020606">
    <property type="entry name" value="Ribosomal_uS7_CS"/>
</dbReference>
<dbReference type="InterPro" id="IPR023798">
    <property type="entry name" value="Ribosomal_uS7_dom"/>
</dbReference>
<dbReference type="InterPro" id="IPR036823">
    <property type="entry name" value="Ribosomal_uS7_dom_sf"/>
</dbReference>
<dbReference type="NCBIfam" id="TIGR01029">
    <property type="entry name" value="rpsG_bact"/>
    <property type="match status" value="1"/>
</dbReference>
<dbReference type="PANTHER" id="PTHR11205">
    <property type="entry name" value="RIBOSOMAL PROTEIN S7"/>
    <property type="match status" value="1"/>
</dbReference>
<dbReference type="Pfam" id="PF00177">
    <property type="entry name" value="Ribosomal_S7"/>
    <property type="match status" value="1"/>
</dbReference>
<dbReference type="PIRSF" id="PIRSF002122">
    <property type="entry name" value="RPS7p_RPS7a_RPS5e_RPS7o"/>
    <property type="match status" value="1"/>
</dbReference>
<dbReference type="SUPFAM" id="SSF47973">
    <property type="entry name" value="Ribosomal protein S7"/>
    <property type="match status" value="1"/>
</dbReference>
<dbReference type="PROSITE" id="PS00052">
    <property type="entry name" value="RIBOSOMAL_S7"/>
    <property type="match status" value="1"/>
</dbReference>
<protein>
    <recommendedName>
        <fullName evidence="1">Small ribosomal subunit protein uS7</fullName>
    </recommendedName>
    <alternativeName>
        <fullName evidence="2">30S ribosomal protein S7</fullName>
    </alternativeName>
</protein>
<name>RS7_SALA4</name>
<accession>B5F8F9</accession>
<keyword id="KW-0687">Ribonucleoprotein</keyword>
<keyword id="KW-0689">Ribosomal protein</keyword>
<keyword id="KW-0694">RNA-binding</keyword>
<keyword id="KW-0699">rRNA-binding</keyword>
<keyword id="KW-0820">tRNA-binding</keyword>
<reference key="1">
    <citation type="journal article" date="2011" name="J. Bacteriol.">
        <title>Comparative genomics of 28 Salmonella enterica isolates: evidence for CRISPR-mediated adaptive sublineage evolution.</title>
        <authorList>
            <person name="Fricke W.F."/>
            <person name="Mammel M.K."/>
            <person name="McDermott P.F."/>
            <person name="Tartera C."/>
            <person name="White D.G."/>
            <person name="Leclerc J.E."/>
            <person name="Ravel J."/>
            <person name="Cebula T.A."/>
        </authorList>
    </citation>
    <scope>NUCLEOTIDE SEQUENCE [LARGE SCALE GENOMIC DNA]</scope>
    <source>
        <strain>SL483</strain>
    </source>
</reference>
<organism>
    <name type="scientific">Salmonella agona (strain SL483)</name>
    <dbReference type="NCBI Taxonomy" id="454166"/>
    <lineage>
        <taxon>Bacteria</taxon>
        <taxon>Pseudomonadati</taxon>
        <taxon>Pseudomonadota</taxon>
        <taxon>Gammaproteobacteria</taxon>
        <taxon>Enterobacterales</taxon>
        <taxon>Enterobacteriaceae</taxon>
        <taxon>Salmonella</taxon>
    </lineage>
</organism>
<sequence length="156" mass="17604">MPRRRVIGQRKILPDPKFGSELLAKFVNILMVDGKKSTAESIVYSALETLAQRSGKSELEAFEVALENVRPTVEVKSRRVGGSTYQVPVEVRPVRRNALAMRWIVEAARKRGDKSMALRLANELSDAAENKGTAVKKREDVHRMAEANKAFAHYRW</sequence>